<protein>
    <recommendedName>
        <fullName evidence="3">Large ribosomal subunit protein uL30</fullName>
    </recommendedName>
    <alternativeName>
        <fullName>60S ribosomal protein L7</fullName>
    </alternativeName>
</protein>
<gene>
    <name type="primary">rpl-7</name>
    <name type="ORF">F53G12.10</name>
</gene>
<proteinExistence type="evidence at protein level"/>
<sequence length="244" mass="28132">MAPTKKVPQVPETVLKRRKQRADARTKAAQHKVTVAAKNKEKKTQYFKRAEKYVQEYRNAQKEGLRLKREAEAKGDFYVPAEHKVAFVVRIRGINQLHPKPRKALQILRLRQINNGVFVKLNKATLPLLRIIEPYVAWGYPNNKTIHDLLYKRGYAKVDGNRVPITDNTIVEQSLGKFNIICLEDLAHEIATVGPHFKEATNFLWPFKLNNPTGGWTKKTNHFVEGGDFGNREDQINNLLRKMV</sequence>
<organism>
    <name type="scientific">Caenorhabditis elegans</name>
    <dbReference type="NCBI Taxonomy" id="6239"/>
    <lineage>
        <taxon>Eukaryota</taxon>
        <taxon>Metazoa</taxon>
        <taxon>Ecdysozoa</taxon>
        <taxon>Nematoda</taxon>
        <taxon>Chromadorea</taxon>
        <taxon>Rhabditida</taxon>
        <taxon>Rhabditina</taxon>
        <taxon>Rhabditomorpha</taxon>
        <taxon>Rhabditoidea</taxon>
        <taxon>Rhabditidae</taxon>
        <taxon>Peloderinae</taxon>
        <taxon>Caenorhabditis</taxon>
    </lineage>
</organism>
<feature type="chain" id="PRO_0000104636" description="Large ribosomal subunit protein uL30">
    <location>
        <begin position="1"/>
        <end position="244"/>
    </location>
</feature>
<feature type="region of interest" description="Disordered" evidence="2">
    <location>
        <begin position="1"/>
        <end position="37"/>
    </location>
</feature>
<name>RL7_CAEEL</name>
<keyword id="KW-0002">3D-structure</keyword>
<keyword id="KW-1185">Reference proteome</keyword>
<keyword id="KW-0687">Ribonucleoprotein</keyword>
<keyword id="KW-0689">Ribosomal protein</keyword>
<keyword id="KW-0694">RNA-binding</keyword>
<accession>O01802</accession>
<dbReference type="EMBL" id="FO081455">
    <property type="protein sequence ID" value="CCD71708.1"/>
    <property type="molecule type" value="Genomic_DNA"/>
</dbReference>
<dbReference type="PIR" id="T29034">
    <property type="entry name" value="T29034"/>
</dbReference>
<dbReference type="RefSeq" id="NP_490676.1">
    <property type="nucleotide sequence ID" value="NM_058275.7"/>
</dbReference>
<dbReference type="PDB" id="9BH5">
    <property type="method" value="EM"/>
    <property type="resolution" value="2.63 A"/>
    <property type="chains" value="CF=1-244"/>
</dbReference>
<dbReference type="PDB" id="9CAI">
    <property type="method" value="EM"/>
    <property type="resolution" value="2.59 A"/>
    <property type="chains" value="CF=1-244"/>
</dbReference>
<dbReference type="PDBsum" id="9BH5"/>
<dbReference type="PDBsum" id="9CAI"/>
<dbReference type="EMDB" id="EMD-44533"/>
<dbReference type="EMDB" id="EMD-45392"/>
<dbReference type="SMR" id="O01802"/>
<dbReference type="BioGRID" id="37106">
    <property type="interactions" value="106"/>
</dbReference>
<dbReference type="DIP" id="DIP-25881N"/>
<dbReference type="FunCoup" id="O01802">
    <property type="interactions" value="1891"/>
</dbReference>
<dbReference type="IntAct" id="O01802">
    <property type="interactions" value="3"/>
</dbReference>
<dbReference type="STRING" id="6239.F53G12.10.3"/>
<dbReference type="iPTMnet" id="O01802"/>
<dbReference type="PaxDb" id="6239-F53G12.10.1"/>
<dbReference type="PeptideAtlas" id="O01802"/>
<dbReference type="EnsemblMetazoa" id="F53G12.10.1">
    <property type="protein sequence ID" value="F53G12.10.1"/>
    <property type="gene ID" value="WBGene00004418"/>
</dbReference>
<dbReference type="EnsemblMetazoa" id="F53G12.10.2">
    <property type="protein sequence ID" value="F53G12.10.2"/>
    <property type="gene ID" value="WBGene00004418"/>
</dbReference>
<dbReference type="GeneID" id="171602"/>
<dbReference type="KEGG" id="cel:CELE_F53G12.10"/>
<dbReference type="UCSC" id="F53G12.10.2">
    <property type="organism name" value="c. elegans"/>
</dbReference>
<dbReference type="AGR" id="WB:WBGene00004418"/>
<dbReference type="CTD" id="171602"/>
<dbReference type="WormBase" id="F53G12.10">
    <property type="protein sequence ID" value="CE11024"/>
    <property type="gene ID" value="WBGene00004418"/>
    <property type="gene designation" value="rpl-7"/>
</dbReference>
<dbReference type="eggNOG" id="KOG3184">
    <property type="taxonomic scope" value="Eukaryota"/>
</dbReference>
<dbReference type="GeneTree" id="ENSGT00950000182878"/>
<dbReference type="HOGENOM" id="CLU_055156_0_2_1"/>
<dbReference type="InParanoid" id="O01802"/>
<dbReference type="OMA" id="IVEPWIA"/>
<dbReference type="OrthoDB" id="28644at2759"/>
<dbReference type="PhylomeDB" id="O01802"/>
<dbReference type="Reactome" id="R-CEL-156827">
    <property type="pathway name" value="L13a-mediated translational silencing of Ceruloplasmin expression"/>
</dbReference>
<dbReference type="Reactome" id="R-CEL-1799339">
    <property type="pathway name" value="SRP-dependent cotranslational protein targeting to membrane"/>
</dbReference>
<dbReference type="Reactome" id="R-CEL-72689">
    <property type="pathway name" value="Formation of a pool of free 40S subunits"/>
</dbReference>
<dbReference type="Reactome" id="R-CEL-72706">
    <property type="pathway name" value="GTP hydrolysis and joining of the 60S ribosomal subunit"/>
</dbReference>
<dbReference type="Reactome" id="R-CEL-975956">
    <property type="pathway name" value="Nonsense Mediated Decay (NMD) independent of the Exon Junction Complex (EJC)"/>
</dbReference>
<dbReference type="Reactome" id="R-CEL-975957">
    <property type="pathway name" value="Nonsense Mediated Decay (NMD) enhanced by the Exon Junction Complex (EJC)"/>
</dbReference>
<dbReference type="SignaLink" id="O01802"/>
<dbReference type="PRO" id="PR:O01802"/>
<dbReference type="Proteomes" id="UP000001940">
    <property type="component" value="Chromosome I"/>
</dbReference>
<dbReference type="Bgee" id="WBGene00004418">
    <property type="expression patterns" value="Expressed in larva and 3 other cell types or tissues"/>
</dbReference>
<dbReference type="GO" id="GO:0022625">
    <property type="term" value="C:cytosolic large ribosomal subunit"/>
    <property type="evidence" value="ECO:0000318"/>
    <property type="project" value="GO_Central"/>
</dbReference>
<dbReference type="GO" id="GO:0003723">
    <property type="term" value="F:RNA binding"/>
    <property type="evidence" value="ECO:0000318"/>
    <property type="project" value="GO_Central"/>
</dbReference>
<dbReference type="GO" id="GO:0003735">
    <property type="term" value="F:structural constituent of ribosome"/>
    <property type="evidence" value="ECO:0000318"/>
    <property type="project" value="GO_Central"/>
</dbReference>
<dbReference type="GO" id="GO:0000463">
    <property type="term" value="P:maturation of LSU-rRNA from tricistronic rRNA transcript (SSU-rRNA, 5.8S rRNA, LSU-rRNA)"/>
    <property type="evidence" value="ECO:0000318"/>
    <property type="project" value="GO_Central"/>
</dbReference>
<dbReference type="CDD" id="cd01657">
    <property type="entry name" value="Ribosomal_L7_archeal_euk"/>
    <property type="match status" value="1"/>
</dbReference>
<dbReference type="FunFam" id="3.30.1390.20:FF:000002">
    <property type="entry name" value="60S ribosomal protein L7"/>
    <property type="match status" value="1"/>
</dbReference>
<dbReference type="FunFam" id="3.30.1390.20:FF:000003">
    <property type="entry name" value="60S ribosomal protein L7"/>
    <property type="match status" value="1"/>
</dbReference>
<dbReference type="Gene3D" id="3.30.1390.20">
    <property type="entry name" value="Ribosomal protein L30, ferredoxin-like fold domain"/>
    <property type="match status" value="1"/>
</dbReference>
<dbReference type="InterPro" id="IPR036919">
    <property type="entry name" value="Ribo_uL30_ferredoxin-like_sf"/>
</dbReference>
<dbReference type="InterPro" id="IPR039699">
    <property type="entry name" value="Ribosomal_uL30"/>
</dbReference>
<dbReference type="InterPro" id="IPR018038">
    <property type="entry name" value="Ribosomal_uL30_CS"/>
</dbReference>
<dbReference type="InterPro" id="IPR005998">
    <property type="entry name" value="Ribosomal_uL30_euk"/>
</dbReference>
<dbReference type="InterPro" id="IPR035808">
    <property type="entry name" value="Ribosomal_uL30_euk_arc"/>
</dbReference>
<dbReference type="InterPro" id="IPR016082">
    <property type="entry name" value="Ribosomal_uL30_ferredoxin-like"/>
</dbReference>
<dbReference type="InterPro" id="IPR012988">
    <property type="entry name" value="Ribosomal_uL30_N_euk"/>
</dbReference>
<dbReference type="NCBIfam" id="TIGR01310">
    <property type="entry name" value="uL30_euk"/>
    <property type="match status" value="1"/>
</dbReference>
<dbReference type="PANTHER" id="PTHR11524">
    <property type="entry name" value="60S RIBOSOMAL PROTEIN L7"/>
    <property type="match status" value="1"/>
</dbReference>
<dbReference type="PANTHER" id="PTHR11524:SF16">
    <property type="entry name" value="LARGE RIBOSOMAL SUBUNIT PROTEIN UL30"/>
    <property type="match status" value="1"/>
</dbReference>
<dbReference type="Pfam" id="PF00327">
    <property type="entry name" value="Ribosomal_L30"/>
    <property type="match status" value="1"/>
</dbReference>
<dbReference type="Pfam" id="PF08079">
    <property type="entry name" value="Ribosomal_L30_N"/>
    <property type="match status" value="1"/>
</dbReference>
<dbReference type="SUPFAM" id="SSF55129">
    <property type="entry name" value="Ribosomal protein L30p/L7e"/>
    <property type="match status" value="1"/>
</dbReference>
<dbReference type="PROSITE" id="PS00634">
    <property type="entry name" value="RIBOSOMAL_L30"/>
    <property type="match status" value="1"/>
</dbReference>
<evidence type="ECO:0000250" key="1"/>
<evidence type="ECO:0000256" key="2">
    <source>
        <dbReference type="SAM" id="MobiDB-lite"/>
    </source>
</evidence>
<evidence type="ECO:0000305" key="3"/>
<comment type="function">
    <text evidence="1">Binds to G-rich structures in 28S rRNA and in mRNAs. Plays a regulatory role in the translation apparatus; inhibits cell-free translation of mRNAs (By similarity).</text>
</comment>
<comment type="similarity">
    <text evidence="3">Belongs to the universal ribosomal protein uL30 family.</text>
</comment>
<reference key="1">
    <citation type="journal article" date="1998" name="Science">
        <title>Genome sequence of the nematode C. elegans: a platform for investigating biology.</title>
        <authorList>
            <consortium name="The C. elegans sequencing consortium"/>
        </authorList>
    </citation>
    <scope>NUCLEOTIDE SEQUENCE [LARGE SCALE GENOMIC DNA]</scope>
    <source>
        <strain>Bristol N2</strain>
    </source>
</reference>